<name>GCSP2_PSEF5</name>
<organism>
    <name type="scientific">Pseudomonas fluorescens (strain ATCC BAA-477 / NRRL B-23932 / Pf-5)</name>
    <dbReference type="NCBI Taxonomy" id="220664"/>
    <lineage>
        <taxon>Bacteria</taxon>
        <taxon>Pseudomonadati</taxon>
        <taxon>Pseudomonadota</taxon>
        <taxon>Gammaproteobacteria</taxon>
        <taxon>Pseudomonadales</taxon>
        <taxon>Pseudomonadaceae</taxon>
        <taxon>Pseudomonas</taxon>
    </lineage>
</organism>
<keyword id="KW-0560">Oxidoreductase</keyword>
<keyword id="KW-0663">Pyridoxal phosphate</keyword>
<protein>
    <recommendedName>
        <fullName evidence="1">Glycine dehydrogenase (decarboxylating) 2</fullName>
        <ecNumber evidence="1">1.4.4.2</ecNumber>
    </recommendedName>
    <alternativeName>
        <fullName evidence="1">Glycine cleavage system P-protein 2</fullName>
    </alternativeName>
    <alternativeName>
        <fullName evidence="1">Glycine decarboxylase 2</fullName>
    </alternativeName>
    <alternativeName>
        <fullName evidence="1">Glycine dehydrogenase (aminomethyl-transferring) 2</fullName>
    </alternativeName>
</protein>
<feature type="chain" id="PRO_0000227117" description="Glycine dehydrogenase (decarboxylating) 2">
    <location>
        <begin position="1"/>
        <end position="957"/>
    </location>
</feature>
<feature type="modified residue" description="N6-(pyridoxal phosphate)lysine" evidence="1">
    <location>
        <position position="707"/>
    </location>
</feature>
<dbReference type="EC" id="1.4.4.2" evidence="1"/>
<dbReference type="EMBL" id="CP000076">
    <property type="protein sequence ID" value="AAY95149.2"/>
    <property type="molecule type" value="Genomic_DNA"/>
</dbReference>
<dbReference type="RefSeq" id="WP_011064133.1">
    <property type="nucleotide sequence ID" value="NC_004129.6"/>
</dbReference>
<dbReference type="SMR" id="Q4K416"/>
<dbReference type="STRING" id="220664.PFL_5959"/>
<dbReference type="KEGG" id="pfl:PFL_5959"/>
<dbReference type="PATRIC" id="fig|220664.5.peg.6076"/>
<dbReference type="eggNOG" id="COG0403">
    <property type="taxonomic scope" value="Bacteria"/>
</dbReference>
<dbReference type="eggNOG" id="COG1003">
    <property type="taxonomic scope" value="Bacteria"/>
</dbReference>
<dbReference type="HOGENOM" id="CLU_004620_3_2_6"/>
<dbReference type="Proteomes" id="UP000008540">
    <property type="component" value="Chromosome"/>
</dbReference>
<dbReference type="GO" id="GO:0005829">
    <property type="term" value="C:cytosol"/>
    <property type="evidence" value="ECO:0007669"/>
    <property type="project" value="TreeGrafter"/>
</dbReference>
<dbReference type="GO" id="GO:0005960">
    <property type="term" value="C:glycine cleavage complex"/>
    <property type="evidence" value="ECO:0007669"/>
    <property type="project" value="TreeGrafter"/>
</dbReference>
<dbReference type="GO" id="GO:0016594">
    <property type="term" value="F:glycine binding"/>
    <property type="evidence" value="ECO:0007669"/>
    <property type="project" value="TreeGrafter"/>
</dbReference>
<dbReference type="GO" id="GO:0004375">
    <property type="term" value="F:glycine dehydrogenase (decarboxylating) activity"/>
    <property type="evidence" value="ECO:0007669"/>
    <property type="project" value="UniProtKB-EC"/>
</dbReference>
<dbReference type="GO" id="GO:0030170">
    <property type="term" value="F:pyridoxal phosphate binding"/>
    <property type="evidence" value="ECO:0007669"/>
    <property type="project" value="TreeGrafter"/>
</dbReference>
<dbReference type="GO" id="GO:0019464">
    <property type="term" value="P:glycine decarboxylation via glycine cleavage system"/>
    <property type="evidence" value="ECO:0007669"/>
    <property type="project" value="UniProtKB-UniRule"/>
</dbReference>
<dbReference type="CDD" id="cd00613">
    <property type="entry name" value="GDC-P"/>
    <property type="match status" value="2"/>
</dbReference>
<dbReference type="FunFam" id="3.40.640.10:FF:000005">
    <property type="entry name" value="Glycine dehydrogenase (decarboxylating), mitochondrial"/>
    <property type="match status" value="1"/>
</dbReference>
<dbReference type="FunFam" id="3.90.1150.10:FF:000007">
    <property type="entry name" value="Glycine dehydrogenase (decarboxylating), mitochondrial"/>
    <property type="match status" value="1"/>
</dbReference>
<dbReference type="FunFam" id="3.40.640.10:FF:000007">
    <property type="entry name" value="glycine dehydrogenase (Decarboxylating), mitochondrial"/>
    <property type="match status" value="1"/>
</dbReference>
<dbReference type="Gene3D" id="3.90.1150.10">
    <property type="entry name" value="Aspartate Aminotransferase, domain 1"/>
    <property type="match status" value="1"/>
</dbReference>
<dbReference type="Gene3D" id="3.40.640.10">
    <property type="entry name" value="Type I PLP-dependent aspartate aminotransferase-like (Major domain)"/>
    <property type="match status" value="2"/>
</dbReference>
<dbReference type="HAMAP" id="MF_00711">
    <property type="entry name" value="GcvP"/>
    <property type="match status" value="1"/>
</dbReference>
<dbReference type="InterPro" id="IPR003437">
    <property type="entry name" value="GcvP"/>
</dbReference>
<dbReference type="InterPro" id="IPR049316">
    <property type="entry name" value="GDC-P_C"/>
</dbReference>
<dbReference type="InterPro" id="IPR049315">
    <property type="entry name" value="GDC-P_N"/>
</dbReference>
<dbReference type="InterPro" id="IPR020581">
    <property type="entry name" value="GDC_P"/>
</dbReference>
<dbReference type="InterPro" id="IPR015424">
    <property type="entry name" value="PyrdxlP-dep_Trfase"/>
</dbReference>
<dbReference type="InterPro" id="IPR015421">
    <property type="entry name" value="PyrdxlP-dep_Trfase_major"/>
</dbReference>
<dbReference type="InterPro" id="IPR015422">
    <property type="entry name" value="PyrdxlP-dep_Trfase_small"/>
</dbReference>
<dbReference type="NCBIfam" id="TIGR00461">
    <property type="entry name" value="gcvP"/>
    <property type="match status" value="1"/>
</dbReference>
<dbReference type="PANTHER" id="PTHR11773:SF13">
    <property type="entry name" value="GLYCINE DEHYDROGENASE (DECARBOXYLATING)"/>
    <property type="match status" value="1"/>
</dbReference>
<dbReference type="PANTHER" id="PTHR11773">
    <property type="entry name" value="GLYCINE DEHYDROGENASE, DECARBOXYLATING"/>
    <property type="match status" value="1"/>
</dbReference>
<dbReference type="Pfam" id="PF21478">
    <property type="entry name" value="GcvP2_C"/>
    <property type="match status" value="1"/>
</dbReference>
<dbReference type="Pfam" id="PF02347">
    <property type="entry name" value="GDC-P"/>
    <property type="match status" value="2"/>
</dbReference>
<dbReference type="SUPFAM" id="SSF53383">
    <property type="entry name" value="PLP-dependent transferases"/>
    <property type="match status" value="2"/>
</dbReference>
<proteinExistence type="inferred from homology"/>
<sequence length="957" mass="103724">MSQLLSLSQLREPNAFLNRHLGPDAEEQQAMLASLGLGSRAELIEQTVPPGIRFNRALDLPPALDEAAALARLKGYAGQNQVWTSLIGMGYHATLTPTVILRNVLENPGWYTAYTPYQPEIAQGRLEALLNFQQMTIDLTGLDLANASLLDEATAAAEAMALAKRVSKSSSNLFFVDEHCHPQTVSVVRTRAEGFGFELVVGGVDELSGHQVFGALLQYPDTHGEIRDLRPLIDQLHAQQALACVAADLLSLLLLTPPGELGADVVLGSSQRFGVPMGYGGPHAAFFACRDDYKRAMPGRIIGVSKDARGQVALRMALQTREQHIRREKANSNICTAQVLLANIAGFYAVYHGPAGLKRIAQRVHRLTCILAVGLERHGIARVNRHFFDTLTLEVGGSQTAIIESARAQQINLRILGRGRLGLSLDETCDESTVTRLFDVFLGADHGLDVSNLDAEALESGIPDPLLRRTRYLTHPVFSAHHSETEMLRYLKQLENKDLALNQSMIPLGSCTMKLNASSEMIPITWPEFANLHPFAPREQAAGYGLLIAELERWLCAITGFDAICMQPNSGAQGEYAGLLAIRRYHESRRQGGRHVCLIPASAHGTNPASAQMAGMQVVIVECDEAGNVDLEDLKAKAQAAGERLSCLMATYPSTHGVYEEGISQICEVIHSHGGQVYMDGANLNAQVGLARPADIGADVSHMNLHKTFCIPHGGGGPGMGPIGVRAHLAPFVANHPVVPIDGPLPENGAVSAAPWGSASILPISWMYIALMGPQLADASEVAILAANYLAEQLSGAFPVLYSGRNGRVAHECILDLRPLKAQTGISEEDVAKRLMDYGFHAPTMSFPVPGTLMVEPTESESKAELDRFIEAMLSIRAEIAQVQEGNWPAEDNPLKGAPHTLADITGVWERSYSIEQAVLPTAHTRAHKYWPAVNRVDNVYGDRNLFCACVPLADYR</sequence>
<comment type="function">
    <text evidence="1">The glycine cleavage system catalyzes the degradation of glycine. The P protein binds the alpha-amino group of glycine through its pyridoxal phosphate cofactor; CO(2) is released and the remaining methylamine moiety is then transferred to the lipoamide cofactor of the H protein.</text>
</comment>
<comment type="catalytic activity">
    <reaction evidence="1">
        <text>N(6)-[(R)-lipoyl]-L-lysyl-[glycine-cleavage complex H protein] + glycine + H(+) = N(6)-[(R)-S(8)-aminomethyldihydrolipoyl]-L-lysyl-[glycine-cleavage complex H protein] + CO2</text>
        <dbReference type="Rhea" id="RHEA:24304"/>
        <dbReference type="Rhea" id="RHEA-COMP:10494"/>
        <dbReference type="Rhea" id="RHEA-COMP:10495"/>
        <dbReference type="ChEBI" id="CHEBI:15378"/>
        <dbReference type="ChEBI" id="CHEBI:16526"/>
        <dbReference type="ChEBI" id="CHEBI:57305"/>
        <dbReference type="ChEBI" id="CHEBI:83099"/>
        <dbReference type="ChEBI" id="CHEBI:83143"/>
        <dbReference type="EC" id="1.4.4.2"/>
    </reaction>
</comment>
<comment type="cofactor">
    <cofactor evidence="1">
        <name>pyridoxal 5'-phosphate</name>
        <dbReference type="ChEBI" id="CHEBI:597326"/>
    </cofactor>
</comment>
<comment type="subunit">
    <text evidence="1">The glycine cleavage system is composed of four proteins: P, T, L and H.</text>
</comment>
<comment type="similarity">
    <text evidence="1">Belongs to the GcvP family.</text>
</comment>
<reference key="1">
    <citation type="journal article" date="2005" name="Nat. Biotechnol.">
        <title>Complete genome sequence of the plant commensal Pseudomonas fluorescens Pf-5.</title>
        <authorList>
            <person name="Paulsen I.T."/>
            <person name="Press C.M."/>
            <person name="Ravel J."/>
            <person name="Kobayashi D.Y."/>
            <person name="Myers G.S.A."/>
            <person name="Mavrodi D.V."/>
            <person name="DeBoy R.T."/>
            <person name="Seshadri R."/>
            <person name="Ren Q."/>
            <person name="Madupu R."/>
            <person name="Dodson R.J."/>
            <person name="Durkin A.S."/>
            <person name="Brinkac L.M."/>
            <person name="Daugherty S.C."/>
            <person name="Sullivan S.A."/>
            <person name="Rosovitz M.J."/>
            <person name="Gwinn M.L."/>
            <person name="Zhou L."/>
            <person name="Schneider D.J."/>
            <person name="Cartinhour S.W."/>
            <person name="Nelson W.C."/>
            <person name="Weidman J."/>
            <person name="Watkins K."/>
            <person name="Tran K."/>
            <person name="Khouri H."/>
            <person name="Pierson E.A."/>
            <person name="Pierson L.S. III"/>
            <person name="Thomashow L.S."/>
            <person name="Loper J.E."/>
        </authorList>
    </citation>
    <scope>NUCLEOTIDE SEQUENCE [LARGE SCALE GENOMIC DNA]</scope>
    <source>
        <strain>ATCC BAA-477 / NRRL B-23932 / Pf-5</strain>
    </source>
</reference>
<accession>Q4K416</accession>
<evidence type="ECO:0000255" key="1">
    <source>
        <dbReference type="HAMAP-Rule" id="MF_00711"/>
    </source>
</evidence>
<gene>
    <name evidence="1" type="primary">gcvP2</name>
    <name type="ordered locus">PFL_5959</name>
</gene>